<sequence length="476" mass="52465">MASYEAVIGLEVHAQLRTRSKLFCSCSTAFGADPNAHVCEVCAGMPGVLPVLNEKAVEFAARMGIAVGCTVNRTSVFARKNYFYPDLPKGYQISQYEQPICEHGHLDISVGDAVKRIGITRIHLEDDAGKNIHSAGENVSYVDLNRTGVPLIEIVSEPDLRSAEEAVAYLKALRAIVVHLGICDGNMEEGSFRCDANVSLRPRGAAEFGTRAELKNLNSFRHVQRAIEYEISRQADLLDDGDKVVQETRLYDSVKNITVSMRGKEEAHDYRYFPDPDLIPIHIDEARLAEWQATLPELPQARLERFMSSFGLSAQDAEVLTAERDHAEFFEAAVKLYDQPRKIANMMLGPLQRELNQRGTSLAVSAMRPEALAELVRIIDAGLISAKIGNDVFGELFENGAMPEAFVRERGLVQISDTSAIEQAVDEVIAENPAEVEAYRGGKTKLVSFFVGQVMRKTRGKANPALVNELLASKLG</sequence>
<proteinExistence type="inferred from homology"/>
<feature type="chain" id="PRO_1000015963" description="Aspartyl/glutamyl-tRNA(Asn/Gln) amidotransferase subunit B">
    <location>
        <begin position="1"/>
        <end position="476"/>
    </location>
</feature>
<accession>A1VCY2</accession>
<evidence type="ECO:0000255" key="1">
    <source>
        <dbReference type="HAMAP-Rule" id="MF_00121"/>
    </source>
</evidence>
<name>GATB_NITV4</name>
<comment type="function">
    <text evidence="1">Allows the formation of correctly charged Asn-tRNA(Asn) or Gln-tRNA(Gln) through the transamidation of misacylated Asp-tRNA(Asn) or Glu-tRNA(Gln) in organisms which lack either or both of asparaginyl-tRNA or glutaminyl-tRNA synthetases. The reaction takes place in the presence of glutamine and ATP through an activated phospho-Asp-tRNA(Asn) or phospho-Glu-tRNA(Gln).</text>
</comment>
<comment type="catalytic activity">
    <reaction evidence="1">
        <text>L-glutamyl-tRNA(Gln) + L-glutamine + ATP + H2O = L-glutaminyl-tRNA(Gln) + L-glutamate + ADP + phosphate + H(+)</text>
        <dbReference type="Rhea" id="RHEA:17521"/>
        <dbReference type="Rhea" id="RHEA-COMP:9681"/>
        <dbReference type="Rhea" id="RHEA-COMP:9684"/>
        <dbReference type="ChEBI" id="CHEBI:15377"/>
        <dbReference type="ChEBI" id="CHEBI:15378"/>
        <dbReference type="ChEBI" id="CHEBI:29985"/>
        <dbReference type="ChEBI" id="CHEBI:30616"/>
        <dbReference type="ChEBI" id="CHEBI:43474"/>
        <dbReference type="ChEBI" id="CHEBI:58359"/>
        <dbReference type="ChEBI" id="CHEBI:78520"/>
        <dbReference type="ChEBI" id="CHEBI:78521"/>
        <dbReference type="ChEBI" id="CHEBI:456216"/>
    </reaction>
</comment>
<comment type="catalytic activity">
    <reaction evidence="1">
        <text>L-aspartyl-tRNA(Asn) + L-glutamine + ATP + H2O = L-asparaginyl-tRNA(Asn) + L-glutamate + ADP + phosphate + 2 H(+)</text>
        <dbReference type="Rhea" id="RHEA:14513"/>
        <dbReference type="Rhea" id="RHEA-COMP:9674"/>
        <dbReference type="Rhea" id="RHEA-COMP:9677"/>
        <dbReference type="ChEBI" id="CHEBI:15377"/>
        <dbReference type="ChEBI" id="CHEBI:15378"/>
        <dbReference type="ChEBI" id="CHEBI:29985"/>
        <dbReference type="ChEBI" id="CHEBI:30616"/>
        <dbReference type="ChEBI" id="CHEBI:43474"/>
        <dbReference type="ChEBI" id="CHEBI:58359"/>
        <dbReference type="ChEBI" id="CHEBI:78515"/>
        <dbReference type="ChEBI" id="CHEBI:78516"/>
        <dbReference type="ChEBI" id="CHEBI:456216"/>
    </reaction>
</comment>
<comment type="subunit">
    <text evidence="1">Heterotrimer of A, B and C subunits.</text>
</comment>
<comment type="similarity">
    <text evidence="1">Belongs to the GatB/GatE family. GatB subfamily.</text>
</comment>
<protein>
    <recommendedName>
        <fullName evidence="1">Aspartyl/glutamyl-tRNA(Asn/Gln) amidotransferase subunit B</fullName>
        <shortName evidence="1">Asp/Glu-ADT subunit B</shortName>
        <ecNumber evidence="1">6.3.5.-</ecNumber>
    </recommendedName>
</protein>
<reference key="1">
    <citation type="journal article" date="2009" name="Environ. Microbiol.">
        <title>Contribution of mobile genetic elements to Desulfovibrio vulgaris genome plasticity.</title>
        <authorList>
            <person name="Walker C.B."/>
            <person name="Stolyar S."/>
            <person name="Chivian D."/>
            <person name="Pinel N."/>
            <person name="Gabster J.A."/>
            <person name="Dehal P.S."/>
            <person name="He Z."/>
            <person name="Yang Z.K."/>
            <person name="Yen H.C."/>
            <person name="Zhou J."/>
            <person name="Wall J.D."/>
            <person name="Hazen T.C."/>
            <person name="Arkin A.P."/>
            <person name="Stahl D.A."/>
        </authorList>
    </citation>
    <scope>NUCLEOTIDE SEQUENCE [LARGE SCALE GENOMIC DNA]</scope>
    <source>
        <strain>DP4</strain>
    </source>
</reference>
<organism>
    <name type="scientific">Nitratidesulfovibrio vulgaris (strain DP4)</name>
    <name type="common">Desulfovibrio vulgaris</name>
    <dbReference type="NCBI Taxonomy" id="391774"/>
    <lineage>
        <taxon>Bacteria</taxon>
        <taxon>Pseudomonadati</taxon>
        <taxon>Thermodesulfobacteriota</taxon>
        <taxon>Desulfovibrionia</taxon>
        <taxon>Desulfovibrionales</taxon>
        <taxon>Desulfovibrionaceae</taxon>
        <taxon>Nitratidesulfovibrio</taxon>
    </lineage>
</organism>
<dbReference type="EC" id="6.3.5.-" evidence="1"/>
<dbReference type="EMBL" id="CP000527">
    <property type="protein sequence ID" value="ABM28298.1"/>
    <property type="molecule type" value="Genomic_DNA"/>
</dbReference>
<dbReference type="RefSeq" id="WP_010939171.1">
    <property type="nucleotide sequence ID" value="NC_008751.1"/>
</dbReference>
<dbReference type="SMR" id="A1VCY2"/>
<dbReference type="KEGG" id="dvl:Dvul_1279"/>
<dbReference type="HOGENOM" id="CLU_019240_0_0_7"/>
<dbReference type="Proteomes" id="UP000009173">
    <property type="component" value="Chromosome"/>
</dbReference>
<dbReference type="GO" id="GO:0050566">
    <property type="term" value="F:asparaginyl-tRNA synthase (glutamine-hydrolyzing) activity"/>
    <property type="evidence" value="ECO:0007669"/>
    <property type="project" value="RHEA"/>
</dbReference>
<dbReference type="GO" id="GO:0005524">
    <property type="term" value="F:ATP binding"/>
    <property type="evidence" value="ECO:0007669"/>
    <property type="project" value="UniProtKB-KW"/>
</dbReference>
<dbReference type="GO" id="GO:0050567">
    <property type="term" value="F:glutaminyl-tRNA synthase (glutamine-hydrolyzing) activity"/>
    <property type="evidence" value="ECO:0007669"/>
    <property type="project" value="UniProtKB-UniRule"/>
</dbReference>
<dbReference type="GO" id="GO:0070681">
    <property type="term" value="P:glutaminyl-tRNAGln biosynthesis via transamidation"/>
    <property type="evidence" value="ECO:0007669"/>
    <property type="project" value="TreeGrafter"/>
</dbReference>
<dbReference type="GO" id="GO:0006412">
    <property type="term" value="P:translation"/>
    <property type="evidence" value="ECO:0007669"/>
    <property type="project" value="UniProtKB-UniRule"/>
</dbReference>
<dbReference type="FunFam" id="1.10.10.410:FF:000001">
    <property type="entry name" value="Aspartyl/glutamyl-tRNA(Asn/Gln) amidotransferase subunit B"/>
    <property type="match status" value="1"/>
</dbReference>
<dbReference type="Gene3D" id="1.10.10.410">
    <property type="match status" value="1"/>
</dbReference>
<dbReference type="Gene3D" id="1.10.150.380">
    <property type="entry name" value="GatB domain, N-terminal subdomain"/>
    <property type="match status" value="1"/>
</dbReference>
<dbReference type="HAMAP" id="MF_00121">
    <property type="entry name" value="GatB"/>
    <property type="match status" value="1"/>
</dbReference>
<dbReference type="InterPro" id="IPR017959">
    <property type="entry name" value="Asn/Gln-tRNA_amidoTrfase_suB/E"/>
</dbReference>
<dbReference type="InterPro" id="IPR006075">
    <property type="entry name" value="Asn/Gln-tRNA_Trfase_suB/E_cat"/>
</dbReference>
<dbReference type="InterPro" id="IPR018027">
    <property type="entry name" value="Asn/Gln_amidotransferase"/>
</dbReference>
<dbReference type="InterPro" id="IPR003789">
    <property type="entry name" value="Asn/Gln_tRNA_amidoTrase-B-like"/>
</dbReference>
<dbReference type="InterPro" id="IPR004413">
    <property type="entry name" value="GatB"/>
</dbReference>
<dbReference type="InterPro" id="IPR042114">
    <property type="entry name" value="GatB_C_1"/>
</dbReference>
<dbReference type="InterPro" id="IPR023168">
    <property type="entry name" value="GatB_Yqey_C_2"/>
</dbReference>
<dbReference type="InterPro" id="IPR017958">
    <property type="entry name" value="Gln-tRNA_amidoTrfase_suB_CS"/>
</dbReference>
<dbReference type="InterPro" id="IPR014746">
    <property type="entry name" value="Gln_synth/guanido_kin_cat_dom"/>
</dbReference>
<dbReference type="NCBIfam" id="TIGR00133">
    <property type="entry name" value="gatB"/>
    <property type="match status" value="1"/>
</dbReference>
<dbReference type="NCBIfam" id="NF004012">
    <property type="entry name" value="PRK05477.1-2"/>
    <property type="match status" value="1"/>
</dbReference>
<dbReference type="NCBIfam" id="NF004014">
    <property type="entry name" value="PRK05477.1-4"/>
    <property type="match status" value="1"/>
</dbReference>
<dbReference type="NCBIfam" id="NF004015">
    <property type="entry name" value="PRK05477.1-5"/>
    <property type="match status" value="1"/>
</dbReference>
<dbReference type="PANTHER" id="PTHR11659">
    <property type="entry name" value="GLUTAMYL-TRNA GLN AMIDOTRANSFERASE SUBUNIT B MITOCHONDRIAL AND PROKARYOTIC PET112-RELATED"/>
    <property type="match status" value="1"/>
</dbReference>
<dbReference type="PANTHER" id="PTHR11659:SF0">
    <property type="entry name" value="GLUTAMYL-TRNA(GLN) AMIDOTRANSFERASE SUBUNIT B, MITOCHONDRIAL"/>
    <property type="match status" value="1"/>
</dbReference>
<dbReference type="Pfam" id="PF02934">
    <property type="entry name" value="GatB_N"/>
    <property type="match status" value="1"/>
</dbReference>
<dbReference type="Pfam" id="PF02637">
    <property type="entry name" value="GatB_Yqey"/>
    <property type="match status" value="1"/>
</dbReference>
<dbReference type="SMART" id="SM00845">
    <property type="entry name" value="GatB_Yqey"/>
    <property type="match status" value="1"/>
</dbReference>
<dbReference type="SUPFAM" id="SSF89095">
    <property type="entry name" value="GatB/YqeY motif"/>
    <property type="match status" value="1"/>
</dbReference>
<dbReference type="SUPFAM" id="SSF55931">
    <property type="entry name" value="Glutamine synthetase/guanido kinase"/>
    <property type="match status" value="1"/>
</dbReference>
<dbReference type="PROSITE" id="PS01234">
    <property type="entry name" value="GATB"/>
    <property type="match status" value="1"/>
</dbReference>
<gene>
    <name evidence="1" type="primary">gatB</name>
    <name type="ordered locus">Dvul_1279</name>
</gene>
<keyword id="KW-0067">ATP-binding</keyword>
<keyword id="KW-0436">Ligase</keyword>
<keyword id="KW-0547">Nucleotide-binding</keyword>
<keyword id="KW-0648">Protein biosynthesis</keyword>